<organism>
    <name type="scientific">Corynebacterium jeikeium (strain K411)</name>
    <dbReference type="NCBI Taxonomy" id="306537"/>
    <lineage>
        <taxon>Bacteria</taxon>
        <taxon>Bacillati</taxon>
        <taxon>Actinomycetota</taxon>
        <taxon>Actinomycetes</taxon>
        <taxon>Mycobacteriales</taxon>
        <taxon>Corynebacteriaceae</taxon>
        <taxon>Corynebacterium</taxon>
    </lineage>
</organism>
<dbReference type="EMBL" id="CR931997">
    <property type="protein sequence ID" value="CAI38040.1"/>
    <property type="molecule type" value="Genomic_DNA"/>
</dbReference>
<dbReference type="RefSeq" id="WP_005292045.1">
    <property type="nucleotide sequence ID" value="NC_007164.1"/>
</dbReference>
<dbReference type="SMR" id="Q4JT17"/>
<dbReference type="STRING" id="306537.jk1860"/>
<dbReference type="GeneID" id="92739484"/>
<dbReference type="KEGG" id="cjk:jk1860"/>
<dbReference type="eggNOG" id="COG0080">
    <property type="taxonomic scope" value="Bacteria"/>
</dbReference>
<dbReference type="HOGENOM" id="CLU_074237_2_1_11"/>
<dbReference type="OrthoDB" id="9802408at2"/>
<dbReference type="Proteomes" id="UP000000545">
    <property type="component" value="Chromosome"/>
</dbReference>
<dbReference type="GO" id="GO:0022625">
    <property type="term" value="C:cytosolic large ribosomal subunit"/>
    <property type="evidence" value="ECO:0007669"/>
    <property type="project" value="TreeGrafter"/>
</dbReference>
<dbReference type="GO" id="GO:0070180">
    <property type="term" value="F:large ribosomal subunit rRNA binding"/>
    <property type="evidence" value="ECO:0007669"/>
    <property type="project" value="UniProtKB-UniRule"/>
</dbReference>
<dbReference type="GO" id="GO:0003735">
    <property type="term" value="F:structural constituent of ribosome"/>
    <property type="evidence" value="ECO:0007669"/>
    <property type="project" value="InterPro"/>
</dbReference>
<dbReference type="GO" id="GO:0006412">
    <property type="term" value="P:translation"/>
    <property type="evidence" value="ECO:0007669"/>
    <property type="project" value="UniProtKB-UniRule"/>
</dbReference>
<dbReference type="CDD" id="cd00349">
    <property type="entry name" value="Ribosomal_L11"/>
    <property type="match status" value="1"/>
</dbReference>
<dbReference type="FunFam" id="1.10.10.250:FF:000001">
    <property type="entry name" value="50S ribosomal protein L11"/>
    <property type="match status" value="1"/>
</dbReference>
<dbReference type="FunFam" id="3.30.1550.10:FF:000001">
    <property type="entry name" value="50S ribosomal protein L11"/>
    <property type="match status" value="1"/>
</dbReference>
<dbReference type="Gene3D" id="1.10.10.250">
    <property type="entry name" value="Ribosomal protein L11, C-terminal domain"/>
    <property type="match status" value="1"/>
</dbReference>
<dbReference type="Gene3D" id="3.30.1550.10">
    <property type="entry name" value="Ribosomal protein L11/L12, N-terminal domain"/>
    <property type="match status" value="1"/>
</dbReference>
<dbReference type="HAMAP" id="MF_00736">
    <property type="entry name" value="Ribosomal_uL11"/>
    <property type="match status" value="1"/>
</dbReference>
<dbReference type="InterPro" id="IPR000911">
    <property type="entry name" value="Ribosomal_uL11"/>
</dbReference>
<dbReference type="InterPro" id="IPR006519">
    <property type="entry name" value="Ribosomal_uL11_bac-typ"/>
</dbReference>
<dbReference type="InterPro" id="IPR020783">
    <property type="entry name" value="Ribosomal_uL11_C"/>
</dbReference>
<dbReference type="InterPro" id="IPR036769">
    <property type="entry name" value="Ribosomal_uL11_C_sf"/>
</dbReference>
<dbReference type="InterPro" id="IPR020784">
    <property type="entry name" value="Ribosomal_uL11_N"/>
</dbReference>
<dbReference type="InterPro" id="IPR036796">
    <property type="entry name" value="Ribosomal_uL11_N_sf"/>
</dbReference>
<dbReference type="NCBIfam" id="TIGR01632">
    <property type="entry name" value="L11_bact"/>
    <property type="match status" value="1"/>
</dbReference>
<dbReference type="PANTHER" id="PTHR11661">
    <property type="entry name" value="60S RIBOSOMAL PROTEIN L12"/>
    <property type="match status" value="1"/>
</dbReference>
<dbReference type="PANTHER" id="PTHR11661:SF1">
    <property type="entry name" value="LARGE RIBOSOMAL SUBUNIT PROTEIN UL11M"/>
    <property type="match status" value="1"/>
</dbReference>
<dbReference type="Pfam" id="PF00298">
    <property type="entry name" value="Ribosomal_L11"/>
    <property type="match status" value="1"/>
</dbReference>
<dbReference type="Pfam" id="PF03946">
    <property type="entry name" value="Ribosomal_L11_N"/>
    <property type="match status" value="1"/>
</dbReference>
<dbReference type="SMART" id="SM00649">
    <property type="entry name" value="RL11"/>
    <property type="match status" value="1"/>
</dbReference>
<dbReference type="SUPFAM" id="SSF54747">
    <property type="entry name" value="Ribosomal L11/L12e N-terminal domain"/>
    <property type="match status" value="1"/>
</dbReference>
<dbReference type="SUPFAM" id="SSF46906">
    <property type="entry name" value="Ribosomal protein L11, C-terminal domain"/>
    <property type="match status" value="1"/>
</dbReference>
<protein>
    <recommendedName>
        <fullName evidence="1">Large ribosomal subunit protein uL11</fullName>
    </recommendedName>
    <alternativeName>
        <fullName evidence="2">50S ribosomal protein L11</fullName>
    </alternativeName>
</protein>
<evidence type="ECO:0000255" key="1">
    <source>
        <dbReference type="HAMAP-Rule" id="MF_00736"/>
    </source>
</evidence>
<evidence type="ECO:0000305" key="2"/>
<sequence>MAKKKVTGLIKLQIQAGQATPAPPVGPALGAHGVNIVEFTKAYNAATEAQRGNIVPVEITVYEDRSFDFKLKTPPAAKLLLKAAGIQKGSGVPHTDKVGSVTWDQCKEIATTKKEDLNANDIEAGAAIIAGTARSMGITVKDAPQK</sequence>
<feature type="chain" id="PRO_0000258144" description="Large ribosomal subunit protein uL11">
    <location>
        <begin position="1"/>
        <end position="146"/>
    </location>
</feature>
<reference key="1">
    <citation type="journal article" date="2005" name="J. Bacteriol.">
        <title>Complete genome sequence and analysis of the multiresistant nosocomial pathogen Corynebacterium jeikeium K411, a lipid-requiring bacterium of the human skin flora.</title>
        <authorList>
            <person name="Tauch A."/>
            <person name="Kaiser O."/>
            <person name="Hain T."/>
            <person name="Goesmann A."/>
            <person name="Weisshaar B."/>
            <person name="Albersmeier A."/>
            <person name="Bekel T."/>
            <person name="Bischoff N."/>
            <person name="Brune I."/>
            <person name="Chakraborty T."/>
            <person name="Kalinowski J."/>
            <person name="Meyer F."/>
            <person name="Rupp O."/>
            <person name="Schneiker S."/>
            <person name="Viehoever P."/>
            <person name="Puehler A."/>
        </authorList>
    </citation>
    <scope>NUCLEOTIDE SEQUENCE [LARGE SCALE GENOMIC DNA]</scope>
    <source>
        <strain>K411</strain>
    </source>
</reference>
<gene>
    <name evidence="1" type="primary">rplK</name>
    <name type="ordered locus">jk1860</name>
</gene>
<comment type="function">
    <text evidence="1">Forms part of the ribosomal stalk which helps the ribosome interact with GTP-bound translation factors.</text>
</comment>
<comment type="subunit">
    <text evidence="1">Part of the ribosomal stalk of the 50S ribosomal subunit. Interacts with L10 and the large rRNA to form the base of the stalk. L10 forms an elongated spine to which L12 dimers bind in a sequential fashion forming a multimeric L10(L12)X complex.</text>
</comment>
<comment type="PTM">
    <text evidence="1">One or more lysine residues are methylated.</text>
</comment>
<comment type="similarity">
    <text evidence="1">Belongs to the universal ribosomal protein uL11 family.</text>
</comment>
<proteinExistence type="inferred from homology"/>
<name>RL11_CORJK</name>
<keyword id="KW-0488">Methylation</keyword>
<keyword id="KW-1185">Reference proteome</keyword>
<keyword id="KW-0687">Ribonucleoprotein</keyword>
<keyword id="KW-0689">Ribosomal protein</keyword>
<keyword id="KW-0694">RNA-binding</keyword>
<keyword id="KW-0699">rRNA-binding</keyword>
<accession>Q4JT17</accession>